<comment type="catalytic activity">
    <reaction evidence="1">
        <text>(S)-2,3,4,5-tetrahydrodipicolinate + succinyl-CoA + H2O = (S)-2-succinylamino-6-oxoheptanedioate + CoA</text>
        <dbReference type="Rhea" id="RHEA:17325"/>
        <dbReference type="ChEBI" id="CHEBI:15377"/>
        <dbReference type="ChEBI" id="CHEBI:15685"/>
        <dbReference type="ChEBI" id="CHEBI:16845"/>
        <dbReference type="ChEBI" id="CHEBI:57287"/>
        <dbReference type="ChEBI" id="CHEBI:57292"/>
        <dbReference type="EC" id="2.3.1.117"/>
    </reaction>
</comment>
<comment type="pathway">
    <text evidence="1">Amino-acid biosynthesis; L-lysine biosynthesis via DAP pathway; LL-2,6-diaminopimelate from (S)-tetrahydrodipicolinate (succinylase route): step 1/3.</text>
</comment>
<comment type="subcellular location">
    <subcellularLocation>
        <location evidence="1">Cytoplasm</location>
    </subcellularLocation>
</comment>
<comment type="similarity">
    <text evidence="1">Belongs to the transferase hexapeptide repeat family.</text>
</comment>
<name>DAPD_SALDC</name>
<reference key="1">
    <citation type="journal article" date="2011" name="J. Bacteriol.">
        <title>Comparative genomics of 28 Salmonella enterica isolates: evidence for CRISPR-mediated adaptive sublineage evolution.</title>
        <authorList>
            <person name="Fricke W.F."/>
            <person name="Mammel M.K."/>
            <person name="McDermott P.F."/>
            <person name="Tartera C."/>
            <person name="White D.G."/>
            <person name="Leclerc J.E."/>
            <person name="Ravel J."/>
            <person name="Cebula T.A."/>
        </authorList>
    </citation>
    <scope>NUCLEOTIDE SEQUENCE [LARGE SCALE GENOMIC DNA]</scope>
    <source>
        <strain>CT_02021853</strain>
    </source>
</reference>
<accession>B5FJ13</accession>
<feature type="chain" id="PRO_1000134064" description="2,3,4,5-tetrahydropyridine-2,6-dicarboxylate N-succinyltransferase">
    <location>
        <begin position="1"/>
        <end position="274"/>
    </location>
</feature>
<organism>
    <name type="scientific">Salmonella dublin (strain CT_02021853)</name>
    <dbReference type="NCBI Taxonomy" id="439851"/>
    <lineage>
        <taxon>Bacteria</taxon>
        <taxon>Pseudomonadati</taxon>
        <taxon>Pseudomonadota</taxon>
        <taxon>Gammaproteobacteria</taxon>
        <taxon>Enterobacterales</taxon>
        <taxon>Enterobacteriaceae</taxon>
        <taxon>Salmonella</taxon>
    </lineage>
</organism>
<protein>
    <recommendedName>
        <fullName evidence="1">2,3,4,5-tetrahydropyridine-2,6-dicarboxylate N-succinyltransferase</fullName>
        <ecNumber evidence="1">2.3.1.117</ecNumber>
    </recommendedName>
    <alternativeName>
        <fullName evidence="1">Tetrahydrodipicolinate N-succinyltransferase</fullName>
        <shortName evidence="1">THP succinyltransferase</shortName>
        <shortName evidence="1">Tetrahydropicolinate succinylase</shortName>
    </alternativeName>
</protein>
<dbReference type="EC" id="2.3.1.117" evidence="1"/>
<dbReference type="EMBL" id="CP001144">
    <property type="protein sequence ID" value="ACH76307.1"/>
    <property type="molecule type" value="Genomic_DNA"/>
</dbReference>
<dbReference type="RefSeq" id="WP_001186673.1">
    <property type="nucleotide sequence ID" value="NC_011205.1"/>
</dbReference>
<dbReference type="SMR" id="B5FJ13"/>
<dbReference type="KEGG" id="sed:SeD_A0234"/>
<dbReference type="HOGENOM" id="CLU_050859_0_1_6"/>
<dbReference type="UniPathway" id="UPA00034">
    <property type="reaction ID" value="UER00019"/>
</dbReference>
<dbReference type="Proteomes" id="UP000008322">
    <property type="component" value="Chromosome"/>
</dbReference>
<dbReference type="GO" id="GO:0005737">
    <property type="term" value="C:cytoplasm"/>
    <property type="evidence" value="ECO:0007669"/>
    <property type="project" value="UniProtKB-SubCell"/>
</dbReference>
<dbReference type="GO" id="GO:0008666">
    <property type="term" value="F:2,3,4,5-tetrahydropyridine-2,6-dicarboxylate N-succinyltransferase activity"/>
    <property type="evidence" value="ECO:0007669"/>
    <property type="project" value="UniProtKB-UniRule"/>
</dbReference>
<dbReference type="GO" id="GO:0016779">
    <property type="term" value="F:nucleotidyltransferase activity"/>
    <property type="evidence" value="ECO:0007669"/>
    <property type="project" value="TreeGrafter"/>
</dbReference>
<dbReference type="GO" id="GO:0019877">
    <property type="term" value="P:diaminopimelate biosynthetic process"/>
    <property type="evidence" value="ECO:0007669"/>
    <property type="project" value="UniProtKB-UniRule"/>
</dbReference>
<dbReference type="GO" id="GO:0009089">
    <property type="term" value="P:lysine biosynthetic process via diaminopimelate"/>
    <property type="evidence" value="ECO:0007669"/>
    <property type="project" value="UniProtKB-UniRule"/>
</dbReference>
<dbReference type="CDD" id="cd03350">
    <property type="entry name" value="LbH_THP_succinylT"/>
    <property type="match status" value="1"/>
</dbReference>
<dbReference type="FunFam" id="1.10.166.10:FF:000001">
    <property type="entry name" value="2,3,4,5-tetrahydropyridine-2,6-dicarboxylate N-succinyltransferase"/>
    <property type="match status" value="1"/>
</dbReference>
<dbReference type="FunFam" id="2.160.10.10:FF:000004">
    <property type="entry name" value="2,3,4,5-tetrahydropyridine-2,6-dicarboxylate N-succinyltransferase"/>
    <property type="match status" value="1"/>
</dbReference>
<dbReference type="Gene3D" id="2.160.10.10">
    <property type="entry name" value="Hexapeptide repeat proteins"/>
    <property type="match status" value="1"/>
</dbReference>
<dbReference type="Gene3D" id="1.10.166.10">
    <property type="entry name" value="Tetrahydrodipicolinate-N-succinyltransferase, N-terminal domain"/>
    <property type="match status" value="1"/>
</dbReference>
<dbReference type="HAMAP" id="MF_00811">
    <property type="entry name" value="DapD"/>
    <property type="match status" value="1"/>
</dbReference>
<dbReference type="InterPro" id="IPR005664">
    <property type="entry name" value="DapD_Trfase_Hexpep_rpt_fam"/>
</dbReference>
<dbReference type="InterPro" id="IPR001451">
    <property type="entry name" value="Hexapep"/>
</dbReference>
<dbReference type="InterPro" id="IPR018357">
    <property type="entry name" value="Hexapep_transf_CS"/>
</dbReference>
<dbReference type="InterPro" id="IPR023180">
    <property type="entry name" value="THP_succinylTrfase_dom1"/>
</dbReference>
<dbReference type="InterPro" id="IPR037133">
    <property type="entry name" value="THP_succinylTrfase_N_sf"/>
</dbReference>
<dbReference type="InterPro" id="IPR011004">
    <property type="entry name" value="Trimer_LpxA-like_sf"/>
</dbReference>
<dbReference type="NCBIfam" id="TIGR00965">
    <property type="entry name" value="dapD"/>
    <property type="match status" value="1"/>
</dbReference>
<dbReference type="NCBIfam" id="NF008808">
    <property type="entry name" value="PRK11830.1"/>
    <property type="match status" value="1"/>
</dbReference>
<dbReference type="PANTHER" id="PTHR19136:SF52">
    <property type="entry name" value="2,3,4,5-TETRAHYDROPYRIDINE-2,6-DICARBOXYLATE N-SUCCINYLTRANSFERASE"/>
    <property type="match status" value="1"/>
</dbReference>
<dbReference type="PANTHER" id="PTHR19136">
    <property type="entry name" value="MOLYBDENUM COFACTOR GUANYLYLTRANSFERASE"/>
    <property type="match status" value="1"/>
</dbReference>
<dbReference type="Pfam" id="PF14602">
    <property type="entry name" value="Hexapep_2"/>
    <property type="match status" value="1"/>
</dbReference>
<dbReference type="Pfam" id="PF14805">
    <property type="entry name" value="THDPS_N_2"/>
    <property type="match status" value="1"/>
</dbReference>
<dbReference type="SUPFAM" id="SSF51161">
    <property type="entry name" value="Trimeric LpxA-like enzymes"/>
    <property type="match status" value="1"/>
</dbReference>
<dbReference type="PROSITE" id="PS00101">
    <property type="entry name" value="HEXAPEP_TRANSFERASES"/>
    <property type="match status" value="1"/>
</dbReference>
<sequence>MQQLQNVIETAFERRADITPANVDTVTREAVNQVISLLDSGALRVAEKIDGQWVTHQWLKKAVLLSFRINDNQVIDGAESRYFDKVPMKFADYDEARFQKEGFRVVPPAAVRQGAFIARNTVLMPSYVNIGAYVDEGTMVDTWATVGSCAQIGKNVHLSGGVGIGGVLEPLQANPTIIEDNCFIGARSEVVEGVIVEEGSVISMGVYLGQSTKIYDRETGEVHYGRVPAGSVVVSGNLPSKDGKYSLYCAVIVKKVDAKTRGKVGINELLRTID</sequence>
<proteinExistence type="inferred from homology"/>
<gene>
    <name evidence="1" type="primary">dapD</name>
    <name type="ordered locus">SeD_A0234</name>
</gene>
<evidence type="ECO:0000255" key="1">
    <source>
        <dbReference type="HAMAP-Rule" id="MF_00811"/>
    </source>
</evidence>
<keyword id="KW-0012">Acyltransferase</keyword>
<keyword id="KW-0028">Amino-acid biosynthesis</keyword>
<keyword id="KW-0963">Cytoplasm</keyword>
<keyword id="KW-0220">Diaminopimelate biosynthesis</keyword>
<keyword id="KW-0457">Lysine biosynthesis</keyword>
<keyword id="KW-0677">Repeat</keyword>
<keyword id="KW-0808">Transferase</keyword>